<comment type="function">
    <text evidence="1">Is probably a protein kinase regulator of UbiI activity which is involved in aerobic coenzyme Q (ubiquinone) biosynthesis.</text>
</comment>
<comment type="pathway">
    <text>Cofactor biosynthesis; ubiquinone biosynthesis [regulation].</text>
</comment>
<comment type="subcellular location">
    <subcellularLocation>
        <location evidence="1">Cell inner membrane</location>
        <topology evidence="1">Single-pass membrane protein</topology>
    </subcellularLocation>
</comment>
<comment type="similarity">
    <text evidence="1">Belongs to the ABC1 family. UbiB subfamily.</text>
</comment>
<accession>Q1CNB2</accession>
<accession>D1Q178</accession>
<evidence type="ECO:0000255" key="1">
    <source>
        <dbReference type="HAMAP-Rule" id="MF_00414"/>
    </source>
</evidence>
<gene>
    <name evidence="1" type="primary">ubiB</name>
    <name type="ordered locus">YPN_0185</name>
    <name type="ORF">YP516_0151</name>
</gene>
<dbReference type="EC" id="2.7.-.-" evidence="1"/>
<dbReference type="EMBL" id="CP000305">
    <property type="protein sequence ID" value="ABG16518.1"/>
    <property type="molecule type" value="Genomic_DNA"/>
</dbReference>
<dbReference type="EMBL" id="ACNQ01000001">
    <property type="protein sequence ID" value="EEO78632.1"/>
    <property type="molecule type" value="Genomic_DNA"/>
</dbReference>
<dbReference type="RefSeq" id="WP_002211535.1">
    <property type="nucleotide sequence ID" value="NZ_ACNQ01000001.1"/>
</dbReference>
<dbReference type="SMR" id="Q1CNB2"/>
<dbReference type="GeneID" id="57974929"/>
<dbReference type="KEGG" id="ypn:YPN_0185"/>
<dbReference type="HOGENOM" id="CLU_006533_0_0_6"/>
<dbReference type="UniPathway" id="UPA00232"/>
<dbReference type="Proteomes" id="UP000008936">
    <property type="component" value="Chromosome"/>
</dbReference>
<dbReference type="GO" id="GO:0005886">
    <property type="term" value="C:plasma membrane"/>
    <property type="evidence" value="ECO:0007669"/>
    <property type="project" value="UniProtKB-SubCell"/>
</dbReference>
<dbReference type="GO" id="GO:0005524">
    <property type="term" value="F:ATP binding"/>
    <property type="evidence" value="ECO:0007669"/>
    <property type="project" value="UniProtKB-KW"/>
</dbReference>
<dbReference type="GO" id="GO:0004672">
    <property type="term" value="F:protein kinase activity"/>
    <property type="evidence" value="ECO:0007669"/>
    <property type="project" value="UniProtKB-UniRule"/>
</dbReference>
<dbReference type="GO" id="GO:0010795">
    <property type="term" value="P:regulation of ubiquinone biosynthetic process"/>
    <property type="evidence" value="ECO:0007669"/>
    <property type="project" value="UniProtKB-UniRule"/>
</dbReference>
<dbReference type="GO" id="GO:0006744">
    <property type="term" value="P:ubiquinone biosynthetic process"/>
    <property type="evidence" value="ECO:0007669"/>
    <property type="project" value="UniProtKB-UniPathway"/>
</dbReference>
<dbReference type="CDD" id="cd13972">
    <property type="entry name" value="UbiB"/>
    <property type="match status" value="1"/>
</dbReference>
<dbReference type="HAMAP" id="MF_00414">
    <property type="entry name" value="UbiB"/>
    <property type="match status" value="1"/>
</dbReference>
<dbReference type="InterPro" id="IPR004147">
    <property type="entry name" value="ABC1_dom"/>
</dbReference>
<dbReference type="InterPro" id="IPR011009">
    <property type="entry name" value="Kinase-like_dom_sf"/>
</dbReference>
<dbReference type="InterPro" id="IPR010232">
    <property type="entry name" value="UbiB"/>
</dbReference>
<dbReference type="InterPro" id="IPR045308">
    <property type="entry name" value="UbiB_bact"/>
</dbReference>
<dbReference type="InterPro" id="IPR050154">
    <property type="entry name" value="UbiB_kinase"/>
</dbReference>
<dbReference type="NCBIfam" id="NF003404">
    <property type="entry name" value="PRK04750.1"/>
    <property type="match status" value="1"/>
</dbReference>
<dbReference type="NCBIfam" id="TIGR01982">
    <property type="entry name" value="UbiB"/>
    <property type="match status" value="1"/>
</dbReference>
<dbReference type="PANTHER" id="PTHR10566">
    <property type="entry name" value="CHAPERONE-ACTIVITY OF BC1 COMPLEX CABC1 -RELATED"/>
    <property type="match status" value="1"/>
</dbReference>
<dbReference type="PANTHER" id="PTHR10566:SF113">
    <property type="entry name" value="PROTEIN ACTIVITY OF BC1 COMPLEX KINASE 7, CHLOROPLASTIC"/>
    <property type="match status" value="1"/>
</dbReference>
<dbReference type="Pfam" id="PF03109">
    <property type="entry name" value="ABC1"/>
    <property type="match status" value="1"/>
</dbReference>
<dbReference type="SUPFAM" id="SSF56112">
    <property type="entry name" value="Protein kinase-like (PK-like)"/>
    <property type="match status" value="1"/>
</dbReference>
<organism>
    <name type="scientific">Yersinia pestis bv. Antiqua (strain Nepal516)</name>
    <dbReference type="NCBI Taxonomy" id="377628"/>
    <lineage>
        <taxon>Bacteria</taxon>
        <taxon>Pseudomonadati</taxon>
        <taxon>Pseudomonadota</taxon>
        <taxon>Gammaproteobacteria</taxon>
        <taxon>Enterobacterales</taxon>
        <taxon>Yersiniaceae</taxon>
        <taxon>Yersinia</taxon>
    </lineage>
</organism>
<feature type="chain" id="PRO_1000050077" description="Probable protein kinase UbiB">
    <location>
        <begin position="1"/>
        <end position="543"/>
    </location>
</feature>
<feature type="transmembrane region" description="Helical" evidence="1">
    <location>
        <begin position="517"/>
        <end position="539"/>
    </location>
</feature>
<feature type="domain" description="Protein kinase" evidence="1">
    <location>
        <begin position="123"/>
        <end position="501"/>
    </location>
</feature>
<feature type="active site" description="Proton acceptor" evidence="1">
    <location>
        <position position="287"/>
    </location>
</feature>
<feature type="binding site" evidence="1">
    <location>
        <begin position="129"/>
        <end position="137"/>
    </location>
    <ligand>
        <name>ATP</name>
        <dbReference type="ChEBI" id="CHEBI:30616"/>
    </ligand>
</feature>
<feature type="binding site" evidence="1">
    <location>
        <position position="152"/>
    </location>
    <ligand>
        <name>ATP</name>
        <dbReference type="ChEBI" id="CHEBI:30616"/>
    </ligand>
</feature>
<reference key="1">
    <citation type="journal article" date="2006" name="J. Bacteriol.">
        <title>Complete genome sequence of Yersinia pestis strains Antiqua and Nepal516: evidence of gene reduction in an emerging pathogen.</title>
        <authorList>
            <person name="Chain P.S.G."/>
            <person name="Hu P."/>
            <person name="Malfatti S.A."/>
            <person name="Radnedge L."/>
            <person name="Larimer F."/>
            <person name="Vergez L.M."/>
            <person name="Worsham P."/>
            <person name="Chu M.C."/>
            <person name="Andersen G.L."/>
        </authorList>
    </citation>
    <scope>NUCLEOTIDE SEQUENCE [LARGE SCALE GENOMIC DNA]</scope>
    <source>
        <strain>Nepal516</strain>
    </source>
</reference>
<reference key="2">
    <citation type="submission" date="2009-04" db="EMBL/GenBank/DDBJ databases">
        <title>Yersinia pestis Nepal516A whole genome shotgun sequencing project.</title>
        <authorList>
            <person name="Plunkett G. III"/>
            <person name="Anderson B.D."/>
            <person name="Baumler D.J."/>
            <person name="Burland V."/>
            <person name="Cabot E.L."/>
            <person name="Glasner J.D."/>
            <person name="Mau B."/>
            <person name="Neeno-Eckwall E."/>
            <person name="Perna N.T."/>
            <person name="Munk A.C."/>
            <person name="Tapia R."/>
            <person name="Green L.D."/>
            <person name="Rogers Y.C."/>
            <person name="Detter J.C."/>
            <person name="Bruce D.C."/>
            <person name="Brettin T.S."/>
        </authorList>
    </citation>
    <scope>NUCLEOTIDE SEQUENCE [LARGE SCALE GENOMIC DNA]</scope>
    <source>
        <strain>Nepal516</strain>
    </source>
</reference>
<protein>
    <recommendedName>
        <fullName evidence="1">Probable protein kinase UbiB</fullName>
        <ecNumber evidence="1">2.7.-.-</ecNumber>
    </recommendedName>
    <alternativeName>
        <fullName evidence="1">Ubiquinone biosynthesis protein UbiB</fullName>
    </alternativeName>
</protein>
<keyword id="KW-0067">ATP-binding</keyword>
<keyword id="KW-0997">Cell inner membrane</keyword>
<keyword id="KW-1003">Cell membrane</keyword>
<keyword id="KW-0418">Kinase</keyword>
<keyword id="KW-0472">Membrane</keyword>
<keyword id="KW-0547">Nucleotide-binding</keyword>
<keyword id="KW-0808">Transferase</keyword>
<keyword id="KW-0812">Transmembrane</keyword>
<keyword id="KW-1133">Transmembrane helix</keyword>
<keyword id="KW-0831">Ubiquinone biosynthesis</keyword>
<sequence>MTPGELRRLYLIIRVFLSYGLDELIPNIRLTLPLRVGRHLFFWLSNRHKDKSLGERLRLALQELGPVWIKFGQMMSTRRDLFPPNIADQLALLQDRVASFDGALARKHIEIAMGGALETWFDDFDSQALASASIAQVHTARLKENGKEVVLKVIRPDILPIIKADVRLMYRLAGWVPKLLPDGRRLRPREVVREYEKTLLDELNLLREAANAIQLRRNFEDSPMLYIPEVYSDYCRESVLVMERIYGIPVSDIAALEDQGTNMKLLAERGVQVFFTQVFRDSFFHADMHPGNIFVSYEHPHDPLYIGIDCGIVGSLNKADKRYLAENFIAFFNRDYRRVAELHVDSGWVPRDTNVEDFEFAIRTVCEPIFEKPLAEISFGHVLLNLFNTARRFNMEVQPQLVLLQKTLLYVEGLGRQLYPQLDLWTTAKPFLESWLRDQVGLPAVIRALKEKAPFWAEKFPELPELVYDSLQQHKLLQQSVEKLTIQIQGQQQRQGQSRYLFGVGATLLVSGTILFLADATEVSTGFIVAGALAWFIGWRRTC</sequence>
<proteinExistence type="inferred from homology"/>
<name>UBIB_YERPN</name>